<organism>
    <name type="scientific">Buchnera aphidicola subsp. Baizongia pistaciae (strain Bp)</name>
    <dbReference type="NCBI Taxonomy" id="224915"/>
    <lineage>
        <taxon>Bacteria</taxon>
        <taxon>Pseudomonadati</taxon>
        <taxon>Pseudomonadota</taxon>
        <taxon>Gammaproteobacteria</taxon>
        <taxon>Enterobacterales</taxon>
        <taxon>Erwiniaceae</taxon>
        <taxon>Buchnera</taxon>
    </lineage>
</organism>
<protein>
    <recommendedName>
        <fullName evidence="1">Protease HtpX</fullName>
        <ecNumber evidence="1">3.4.24.-</ecNumber>
    </recommendedName>
    <alternativeName>
        <fullName evidence="1">Heat shock protein HtpX</fullName>
    </alternativeName>
</protein>
<accession>P59559</accession>
<sequence>MMRIILFLLTNLAVVCVFGFILSFTKIPPESISGLLIFSSIFGFSGSIISLLMSKWIALKSVNGQVIYQPSNNTEQWLIDTINSQSKKMGIKTPTIAIYHAFDMNAFATGAYKNSALIAVSTGLLENMSYDEAEAVLAHEINHISNGDMVTMTLVQGIVNTFVIFISRIIAQFASSILSENREDNNSNRNTWVYIICSTILELIFGIFASIITMWFSRHREFYADAGSAKLVGRKKMISALQKLKLSYEPQEKSNIIAFCINGKHSSFLNLFMSHPSLDKRIQALYNRDYM</sequence>
<evidence type="ECO:0000255" key="1">
    <source>
        <dbReference type="HAMAP-Rule" id="MF_00188"/>
    </source>
</evidence>
<proteinExistence type="inferred from homology"/>
<dbReference type="EC" id="3.4.24.-" evidence="1"/>
<dbReference type="EMBL" id="AE016826">
    <property type="protein sequence ID" value="AAO27024.1"/>
    <property type="molecule type" value="Genomic_DNA"/>
</dbReference>
<dbReference type="RefSeq" id="WP_011091425.1">
    <property type="nucleotide sequence ID" value="NC_004545.1"/>
</dbReference>
<dbReference type="SMR" id="P59559"/>
<dbReference type="STRING" id="224915.bbp_299"/>
<dbReference type="MEROPS" id="M48.002"/>
<dbReference type="KEGG" id="bab:bbp_299"/>
<dbReference type="eggNOG" id="COG0501">
    <property type="taxonomic scope" value="Bacteria"/>
</dbReference>
<dbReference type="HOGENOM" id="CLU_042266_1_0_6"/>
<dbReference type="OrthoDB" id="15218at2"/>
<dbReference type="Proteomes" id="UP000000601">
    <property type="component" value="Chromosome"/>
</dbReference>
<dbReference type="GO" id="GO:0005886">
    <property type="term" value="C:plasma membrane"/>
    <property type="evidence" value="ECO:0007669"/>
    <property type="project" value="UniProtKB-SubCell"/>
</dbReference>
<dbReference type="GO" id="GO:0004222">
    <property type="term" value="F:metalloendopeptidase activity"/>
    <property type="evidence" value="ECO:0007669"/>
    <property type="project" value="UniProtKB-UniRule"/>
</dbReference>
<dbReference type="GO" id="GO:0008270">
    <property type="term" value="F:zinc ion binding"/>
    <property type="evidence" value="ECO:0007669"/>
    <property type="project" value="UniProtKB-UniRule"/>
</dbReference>
<dbReference type="GO" id="GO:0006508">
    <property type="term" value="P:proteolysis"/>
    <property type="evidence" value="ECO:0007669"/>
    <property type="project" value="UniProtKB-KW"/>
</dbReference>
<dbReference type="CDD" id="cd07335">
    <property type="entry name" value="M48B_HtpX_like"/>
    <property type="match status" value="1"/>
</dbReference>
<dbReference type="Gene3D" id="3.30.2010.10">
    <property type="entry name" value="Metalloproteases ('zincins'), catalytic domain"/>
    <property type="match status" value="1"/>
</dbReference>
<dbReference type="HAMAP" id="MF_00188">
    <property type="entry name" value="Pept_M48_protease_HtpX"/>
    <property type="match status" value="1"/>
</dbReference>
<dbReference type="InterPro" id="IPR050083">
    <property type="entry name" value="HtpX_protease"/>
</dbReference>
<dbReference type="InterPro" id="IPR022919">
    <property type="entry name" value="Pept_M48_protease_HtpX"/>
</dbReference>
<dbReference type="InterPro" id="IPR001915">
    <property type="entry name" value="Peptidase_M48"/>
</dbReference>
<dbReference type="NCBIfam" id="NF003965">
    <property type="entry name" value="PRK05457.1"/>
    <property type="match status" value="1"/>
</dbReference>
<dbReference type="PANTHER" id="PTHR43221">
    <property type="entry name" value="PROTEASE HTPX"/>
    <property type="match status" value="1"/>
</dbReference>
<dbReference type="PANTHER" id="PTHR43221:SF1">
    <property type="entry name" value="PROTEASE HTPX"/>
    <property type="match status" value="1"/>
</dbReference>
<dbReference type="Pfam" id="PF01435">
    <property type="entry name" value="Peptidase_M48"/>
    <property type="match status" value="1"/>
</dbReference>
<dbReference type="PROSITE" id="PS00142">
    <property type="entry name" value="ZINC_PROTEASE"/>
    <property type="match status" value="1"/>
</dbReference>
<comment type="cofactor">
    <cofactor evidence="1">
        <name>Zn(2+)</name>
        <dbReference type="ChEBI" id="CHEBI:29105"/>
    </cofactor>
    <text evidence="1">Binds 1 zinc ion per subunit.</text>
</comment>
<comment type="subcellular location">
    <subcellularLocation>
        <location evidence="1">Cell membrane</location>
        <topology evidence="1">Multi-pass membrane protein</topology>
    </subcellularLocation>
</comment>
<comment type="similarity">
    <text evidence="1">Belongs to the peptidase M48B family.</text>
</comment>
<reference key="1">
    <citation type="journal article" date="2003" name="Proc. Natl. Acad. Sci. U.S.A.">
        <title>Reductive genome evolution in Buchnera aphidicola.</title>
        <authorList>
            <person name="van Ham R.C.H.J."/>
            <person name="Kamerbeek J."/>
            <person name="Palacios C."/>
            <person name="Rausell C."/>
            <person name="Abascal F."/>
            <person name="Bastolla U."/>
            <person name="Fernandez J.M."/>
            <person name="Jimenez L."/>
            <person name="Postigo M."/>
            <person name="Silva F.J."/>
            <person name="Tamames J."/>
            <person name="Viguera E."/>
            <person name="Latorre A."/>
            <person name="Valencia A."/>
            <person name="Moran F."/>
            <person name="Moya A."/>
        </authorList>
    </citation>
    <scope>NUCLEOTIDE SEQUENCE [LARGE SCALE GENOMIC DNA]</scope>
    <source>
        <strain>Bp</strain>
    </source>
</reference>
<keyword id="KW-1003">Cell membrane</keyword>
<keyword id="KW-0378">Hydrolase</keyword>
<keyword id="KW-0472">Membrane</keyword>
<keyword id="KW-0479">Metal-binding</keyword>
<keyword id="KW-0482">Metalloprotease</keyword>
<keyword id="KW-0645">Protease</keyword>
<keyword id="KW-1185">Reference proteome</keyword>
<keyword id="KW-0812">Transmembrane</keyword>
<keyword id="KW-1133">Transmembrane helix</keyword>
<keyword id="KW-0862">Zinc</keyword>
<name>HTPX_BUCBP</name>
<feature type="chain" id="PRO_0000138858" description="Protease HtpX">
    <location>
        <begin position="1"/>
        <end position="291"/>
    </location>
</feature>
<feature type="transmembrane region" description="Helical" evidence="1">
    <location>
        <begin position="4"/>
        <end position="24"/>
    </location>
</feature>
<feature type="transmembrane region" description="Helical" evidence="1">
    <location>
        <begin position="32"/>
        <end position="52"/>
    </location>
</feature>
<feature type="transmembrane region" description="Helical" evidence="1">
    <location>
        <begin position="158"/>
        <end position="178"/>
    </location>
</feature>
<feature type="transmembrane region" description="Helical" evidence="1">
    <location>
        <begin position="192"/>
        <end position="212"/>
    </location>
</feature>
<feature type="active site" evidence="1">
    <location>
        <position position="140"/>
    </location>
</feature>
<feature type="binding site" evidence="1">
    <location>
        <position position="139"/>
    </location>
    <ligand>
        <name>Zn(2+)</name>
        <dbReference type="ChEBI" id="CHEBI:29105"/>
        <note>catalytic</note>
    </ligand>
</feature>
<feature type="binding site" evidence="1">
    <location>
        <position position="143"/>
    </location>
    <ligand>
        <name>Zn(2+)</name>
        <dbReference type="ChEBI" id="CHEBI:29105"/>
        <note>catalytic</note>
    </ligand>
</feature>
<feature type="binding site" evidence="1">
    <location>
        <position position="221"/>
    </location>
    <ligand>
        <name>Zn(2+)</name>
        <dbReference type="ChEBI" id="CHEBI:29105"/>
        <note>catalytic</note>
    </ligand>
</feature>
<gene>
    <name evidence="1" type="primary">htpX</name>
    <name type="ordered locus">bbp_299</name>
</gene>